<keyword id="KW-0687">Ribonucleoprotein</keyword>
<keyword id="KW-0689">Ribosomal protein</keyword>
<keyword id="KW-0694">RNA-binding</keyword>
<keyword id="KW-0699">rRNA-binding</keyword>
<comment type="function">
    <text evidence="1">Located on the platform of the 30S subunit, it bridges several disparate RNA helices of the 16S rRNA. Forms part of the Shine-Dalgarno cleft in the 70S ribosome.</text>
</comment>
<comment type="subunit">
    <text evidence="1">Part of the 30S ribosomal subunit. Interacts with proteins S7 and S18. Binds to IF-3.</text>
</comment>
<comment type="similarity">
    <text evidence="1">Belongs to the universal ribosomal protein uS11 family.</text>
</comment>
<protein>
    <recommendedName>
        <fullName evidence="1">Small ribosomal subunit protein uS11</fullName>
    </recommendedName>
    <alternativeName>
        <fullName evidence="2">30S ribosomal protein S11</fullName>
    </alternativeName>
</protein>
<name>RS11_BURCM</name>
<evidence type="ECO:0000255" key="1">
    <source>
        <dbReference type="HAMAP-Rule" id="MF_01310"/>
    </source>
</evidence>
<evidence type="ECO:0000305" key="2"/>
<sequence>MAKASNTAAQRVRKKVKKNVAEGVVHVHASFNNTIITITDRQGNALAWATSGGQGFKGSRKSTPFAAQVAAESAGRVAMEYGVKNLEVRIKGPGPGRESAVRALHGLGIKITAISDVTPIPHNGCRPPKRRRI</sequence>
<feature type="chain" id="PRO_0000294728" description="Small ribosomal subunit protein uS11">
    <location>
        <begin position="1"/>
        <end position="133"/>
    </location>
</feature>
<dbReference type="EMBL" id="CP000440">
    <property type="protein sequence ID" value="ABI85851.1"/>
    <property type="molecule type" value="Genomic_DNA"/>
</dbReference>
<dbReference type="RefSeq" id="WP_004197937.1">
    <property type="nucleotide sequence ID" value="NZ_CP009798.1"/>
</dbReference>
<dbReference type="SMR" id="Q0BJ22"/>
<dbReference type="GeneID" id="98107136"/>
<dbReference type="KEGG" id="bam:Bamb_0291"/>
<dbReference type="PATRIC" id="fig|339670.21.peg.1329"/>
<dbReference type="eggNOG" id="COG0100">
    <property type="taxonomic scope" value="Bacteria"/>
</dbReference>
<dbReference type="Proteomes" id="UP000000662">
    <property type="component" value="Chromosome 1"/>
</dbReference>
<dbReference type="GO" id="GO:1990904">
    <property type="term" value="C:ribonucleoprotein complex"/>
    <property type="evidence" value="ECO:0007669"/>
    <property type="project" value="UniProtKB-KW"/>
</dbReference>
<dbReference type="GO" id="GO:0005840">
    <property type="term" value="C:ribosome"/>
    <property type="evidence" value="ECO:0007669"/>
    <property type="project" value="UniProtKB-KW"/>
</dbReference>
<dbReference type="GO" id="GO:0019843">
    <property type="term" value="F:rRNA binding"/>
    <property type="evidence" value="ECO:0007669"/>
    <property type="project" value="UniProtKB-UniRule"/>
</dbReference>
<dbReference type="GO" id="GO:0003735">
    <property type="term" value="F:structural constituent of ribosome"/>
    <property type="evidence" value="ECO:0007669"/>
    <property type="project" value="InterPro"/>
</dbReference>
<dbReference type="GO" id="GO:0006412">
    <property type="term" value="P:translation"/>
    <property type="evidence" value="ECO:0007669"/>
    <property type="project" value="UniProtKB-UniRule"/>
</dbReference>
<dbReference type="FunFam" id="3.30.420.80:FF:000001">
    <property type="entry name" value="30S ribosomal protein S11"/>
    <property type="match status" value="1"/>
</dbReference>
<dbReference type="Gene3D" id="3.30.420.80">
    <property type="entry name" value="Ribosomal protein S11"/>
    <property type="match status" value="1"/>
</dbReference>
<dbReference type="HAMAP" id="MF_01310">
    <property type="entry name" value="Ribosomal_uS11"/>
    <property type="match status" value="1"/>
</dbReference>
<dbReference type="InterPro" id="IPR001971">
    <property type="entry name" value="Ribosomal_uS11"/>
</dbReference>
<dbReference type="InterPro" id="IPR019981">
    <property type="entry name" value="Ribosomal_uS11_bac-type"/>
</dbReference>
<dbReference type="InterPro" id="IPR018102">
    <property type="entry name" value="Ribosomal_uS11_CS"/>
</dbReference>
<dbReference type="InterPro" id="IPR036967">
    <property type="entry name" value="Ribosomal_uS11_sf"/>
</dbReference>
<dbReference type="NCBIfam" id="NF003698">
    <property type="entry name" value="PRK05309.1"/>
    <property type="match status" value="1"/>
</dbReference>
<dbReference type="NCBIfam" id="TIGR03632">
    <property type="entry name" value="uS11_bact"/>
    <property type="match status" value="1"/>
</dbReference>
<dbReference type="PANTHER" id="PTHR11759">
    <property type="entry name" value="40S RIBOSOMAL PROTEIN S14/30S RIBOSOMAL PROTEIN S11"/>
    <property type="match status" value="1"/>
</dbReference>
<dbReference type="Pfam" id="PF00411">
    <property type="entry name" value="Ribosomal_S11"/>
    <property type="match status" value="1"/>
</dbReference>
<dbReference type="PIRSF" id="PIRSF002131">
    <property type="entry name" value="Ribosomal_S11"/>
    <property type="match status" value="1"/>
</dbReference>
<dbReference type="SUPFAM" id="SSF53137">
    <property type="entry name" value="Translational machinery components"/>
    <property type="match status" value="1"/>
</dbReference>
<dbReference type="PROSITE" id="PS00054">
    <property type="entry name" value="RIBOSOMAL_S11"/>
    <property type="match status" value="1"/>
</dbReference>
<gene>
    <name evidence="1" type="primary">rpsK</name>
    <name type="ordered locus">Bamb_0291</name>
</gene>
<proteinExistence type="inferred from homology"/>
<reference key="1">
    <citation type="submission" date="2006-08" db="EMBL/GenBank/DDBJ databases">
        <title>Complete sequence of chromosome 1 of Burkholderia cepacia AMMD.</title>
        <authorList>
            <person name="Copeland A."/>
            <person name="Lucas S."/>
            <person name="Lapidus A."/>
            <person name="Barry K."/>
            <person name="Detter J.C."/>
            <person name="Glavina del Rio T."/>
            <person name="Hammon N."/>
            <person name="Israni S."/>
            <person name="Pitluck S."/>
            <person name="Bruce D."/>
            <person name="Chain P."/>
            <person name="Malfatti S."/>
            <person name="Shin M."/>
            <person name="Vergez L."/>
            <person name="Schmutz J."/>
            <person name="Larimer F."/>
            <person name="Land M."/>
            <person name="Hauser L."/>
            <person name="Kyrpides N."/>
            <person name="Kim E."/>
            <person name="Parke J."/>
            <person name="Coenye T."/>
            <person name="Konstantinidis K."/>
            <person name="Ramette A."/>
            <person name="Tiedje J."/>
            <person name="Richardson P."/>
        </authorList>
    </citation>
    <scope>NUCLEOTIDE SEQUENCE [LARGE SCALE GENOMIC DNA]</scope>
    <source>
        <strain>ATCC BAA-244 / DSM 16087 / CCUG 44356 / LMG 19182 / AMMD</strain>
    </source>
</reference>
<accession>Q0BJ22</accession>
<organism>
    <name type="scientific">Burkholderia ambifaria (strain ATCC BAA-244 / DSM 16087 / CCUG 44356 / LMG 19182 / AMMD)</name>
    <name type="common">Burkholderia cepacia (strain AMMD)</name>
    <dbReference type="NCBI Taxonomy" id="339670"/>
    <lineage>
        <taxon>Bacteria</taxon>
        <taxon>Pseudomonadati</taxon>
        <taxon>Pseudomonadota</taxon>
        <taxon>Betaproteobacteria</taxon>
        <taxon>Burkholderiales</taxon>
        <taxon>Burkholderiaceae</taxon>
        <taxon>Burkholderia</taxon>
        <taxon>Burkholderia cepacia complex</taxon>
    </lineage>
</organism>